<keyword id="KW-0021">Allosteric enzyme</keyword>
<keyword id="KW-0067">ATP-binding</keyword>
<keyword id="KW-0963">Cytoplasm</keyword>
<keyword id="KW-0324">Glycolysis</keyword>
<keyword id="KW-0418">Kinase</keyword>
<keyword id="KW-0460">Magnesium</keyword>
<keyword id="KW-0479">Metal-binding</keyword>
<keyword id="KW-0547">Nucleotide-binding</keyword>
<keyword id="KW-0808">Transferase</keyword>
<feature type="chain" id="PRO_1000192375" description="ATP-dependent 6-phosphofructokinase">
    <location>
        <begin position="1"/>
        <end position="319"/>
    </location>
</feature>
<feature type="active site" description="Proton acceptor" evidence="1">
    <location>
        <position position="127"/>
    </location>
</feature>
<feature type="binding site" evidence="1">
    <location>
        <position position="11"/>
    </location>
    <ligand>
        <name>ATP</name>
        <dbReference type="ChEBI" id="CHEBI:30616"/>
    </ligand>
</feature>
<feature type="binding site" evidence="1">
    <location>
        <begin position="21"/>
        <end position="25"/>
    </location>
    <ligand>
        <name>ADP</name>
        <dbReference type="ChEBI" id="CHEBI:456216"/>
        <note>allosteric activator; ligand shared between dimeric partners</note>
    </ligand>
</feature>
<feature type="binding site" evidence="1">
    <location>
        <begin position="72"/>
        <end position="73"/>
    </location>
    <ligand>
        <name>ATP</name>
        <dbReference type="ChEBI" id="CHEBI:30616"/>
    </ligand>
</feature>
<feature type="binding site" evidence="1">
    <location>
        <begin position="102"/>
        <end position="105"/>
    </location>
    <ligand>
        <name>ATP</name>
        <dbReference type="ChEBI" id="CHEBI:30616"/>
    </ligand>
</feature>
<feature type="binding site" evidence="1">
    <location>
        <position position="103"/>
    </location>
    <ligand>
        <name>Mg(2+)</name>
        <dbReference type="ChEBI" id="CHEBI:18420"/>
        <note>catalytic</note>
    </ligand>
</feature>
<feature type="binding site" description="in other chain" evidence="1">
    <location>
        <begin position="125"/>
        <end position="127"/>
    </location>
    <ligand>
        <name>substrate</name>
        <note>ligand shared between dimeric partners</note>
    </ligand>
</feature>
<feature type="binding site" description="in other chain" evidence="1">
    <location>
        <position position="154"/>
    </location>
    <ligand>
        <name>ADP</name>
        <dbReference type="ChEBI" id="CHEBI:456216"/>
        <note>allosteric activator; ligand shared between dimeric partners</note>
    </ligand>
</feature>
<feature type="binding site" evidence="1">
    <location>
        <position position="162"/>
    </location>
    <ligand>
        <name>substrate</name>
        <note>ligand shared between dimeric partners</note>
    </ligand>
</feature>
<feature type="binding site" description="in other chain" evidence="1">
    <location>
        <begin position="169"/>
        <end position="171"/>
    </location>
    <ligand>
        <name>substrate</name>
        <note>ligand shared between dimeric partners</note>
    </ligand>
</feature>
<feature type="binding site" description="in other chain" evidence="1">
    <location>
        <begin position="185"/>
        <end position="187"/>
    </location>
    <ligand>
        <name>ADP</name>
        <dbReference type="ChEBI" id="CHEBI:456216"/>
        <note>allosteric activator; ligand shared between dimeric partners</note>
    </ligand>
</feature>
<feature type="binding site" description="in other chain" evidence="1">
    <location>
        <position position="211"/>
    </location>
    <ligand>
        <name>ADP</name>
        <dbReference type="ChEBI" id="CHEBI:456216"/>
        <note>allosteric activator; ligand shared between dimeric partners</note>
    </ligand>
</feature>
<feature type="binding site" description="in other chain" evidence="1">
    <location>
        <begin position="213"/>
        <end position="215"/>
    </location>
    <ligand>
        <name>ADP</name>
        <dbReference type="ChEBI" id="CHEBI:456216"/>
        <note>allosteric activator; ligand shared between dimeric partners</note>
    </ligand>
</feature>
<feature type="binding site" description="in other chain" evidence="1">
    <location>
        <position position="222"/>
    </location>
    <ligand>
        <name>substrate</name>
        <note>ligand shared between dimeric partners</note>
    </ligand>
</feature>
<feature type="binding site" evidence="1">
    <location>
        <position position="243"/>
    </location>
    <ligand>
        <name>substrate</name>
        <note>ligand shared between dimeric partners</note>
    </ligand>
</feature>
<feature type="binding site" description="in other chain" evidence="1">
    <location>
        <begin position="249"/>
        <end position="252"/>
    </location>
    <ligand>
        <name>substrate</name>
        <note>ligand shared between dimeric partners</note>
    </ligand>
</feature>
<reference key="1">
    <citation type="journal article" date="2011" name="J. Bacteriol.">
        <title>Genome sequence of lineage III Listeria monocytogenes strain HCC23.</title>
        <authorList>
            <person name="Steele C.L."/>
            <person name="Donaldson J.R."/>
            <person name="Paul D."/>
            <person name="Banes M.M."/>
            <person name="Arick T."/>
            <person name="Bridges S.M."/>
            <person name="Lawrence M.L."/>
        </authorList>
    </citation>
    <scope>NUCLEOTIDE SEQUENCE [LARGE SCALE GENOMIC DNA]</scope>
    <source>
        <strain>HCC23</strain>
    </source>
</reference>
<dbReference type="EC" id="2.7.1.11" evidence="1"/>
<dbReference type="EMBL" id="CP001175">
    <property type="protein sequence ID" value="ACK39346.1"/>
    <property type="molecule type" value="Genomic_DNA"/>
</dbReference>
<dbReference type="RefSeq" id="WP_012581259.1">
    <property type="nucleotide sequence ID" value="NC_011660.1"/>
</dbReference>
<dbReference type="SMR" id="B8DHH7"/>
<dbReference type="KEGG" id="lmh:LMHCC_0998"/>
<dbReference type="HOGENOM" id="CLU_020655_0_1_9"/>
<dbReference type="UniPathway" id="UPA00109">
    <property type="reaction ID" value="UER00182"/>
</dbReference>
<dbReference type="GO" id="GO:0005945">
    <property type="term" value="C:6-phosphofructokinase complex"/>
    <property type="evidence" value="ECO:0007669"/>
    <property type="project" value="TreeGrafter"/>
</dbReference>
<dbReference type="GO" id="GO:0003872">
    <property type="term" value="F:6-phosphofructokinase activity"/>
    <property type="evidence" value="ECO:0007669"/>
    <property type="project" value="UniProtKB-UniRule"/>
</dbReference>
<dbReference type="GO" id="GO:0016208">
    <property type="term" value="F:AMP binding"/>
    <property type="evidence" value="ECO:0007669"/>
    <property type="project" value="TreeGrafter"/>
</dbReference>
<dbReference type="GO" id="GO:0005524">
    <property type="term" value="F:ATP binding"/>
    <property type="evidence" value="ECO:0007669"/>
    <property type="project" value="UniProtKB-KW"/>
</dbReference>
<dbReference type="GO" id="GO:0070095">
    <property type="term" value="F:fructose-6-phosphate binding"/>
    <property type="evidence" value="ECO:0007669"/>
    <property type="project" value="TreeGrafter"/>
</dbReference>
<dbReference type="GO" id="GO:0042802">
    <property type="term" value="F:identical protein binding"/>
    <property type="evidence" value="ECO:0007669"/>
    <property type="project" value="TreeGrafter"/>
</dbReference>
<dbReference type="GO" id="GO:0046872">
    <property type="term" value="F:metal ion binding"/>
    <property type="evidence" value="ECO:0007669"/>
    <property type="project" value="UniProtKB-KW"/>
</dbReference>
<dbReference type="GO" id="GO:0048029">
    <property type="term" value="F:monosaccharide binding"/>
    <property type="evidence" value="ECO:0007669"/>
    <property type="project" value="TreeGrafter"/>
</dbReference>
<dbReference type="GO" id="GO:0061621">
    <property type="term" value="P:canonical glycolysis"/>
    <property type="evidence" value="ECO:0007669"/>
    <property type="project" value="TreeGrafter"/>
</dbReference>
<dbReference type="GO" id="GO:0030388">
    <property type="term" value="P:fructose 1,6-bisphosphate metabolic process"/>
    <property type="evidence" value="ECO:0007669"/>
    <property type="project" value="TreeGrafter"/>
</dbReference>
<dbReference type="GO" id="GO:0006002">
    <property type="term" value="P:fructose 6-phosphate metabolic process"/>
    <property type="evidence" value="ECO:0007669"/>
    <property type="project" value="InterPro"/>
</dbReference>
<dbReference type="CDD" id="cd00763">
    <property type="entry name" value="Bacterial_PFK"/>
    <property type="match status" value="1"/>
</dbReference>
<dbReference type="FunFam" id="3.40.50.450:FF:000001">
    <property type="entry name" value="ATP-dependent 6-phosphofructokinase"/>
    <property type="match status" value="1"/>
</dbReference>
<dbReference type="FunFam" id="3.40.50.460:FF:000002">
    <property type="entry name" value="ATP-dependent 6-phosphofructokinase"/>
    <property type="match status" value="1"/>
</dbReference>
<dbReference type="Gene3D" id="3.40.50.450">
    <property type="match status" value="1"/>
</dbReference>
<dbReference type="Gene3D" id="3.40.50.460">
    <property type="entry name" value="Phosphofructokinase domain"/>
    <property type="match status" value="1"/>
</dbReference>
<dbReference type="HAMAP" id="MF_00339">
    <property type="entry name" value="Phosphofructokinase_I_B1"/>
    <property type="match status" value="1"/>
</dbReference>
<dbReference type="InterPro" id="IPR022953">
    <property type="entry name" value="ATP_PFK"/>
</dbReference>
<dbReference type="InterPro" id="IPR012003">
    <property type="entry name" value="ATP_PFK_prok-type"/>
</dbReference>
<dbReference type="InterPro" id="IPR012828">
    <property type="entry name" value="PFKA_ATP_prok"/>
</dbReference>
<dbReference type="InterPro" id="IPR015912">
    <property type="entry name" value="Phosphofructokinase_CS"/>
</dbReference>
<dbReference type="InterPro" id="IPR000023">
    <property type="entry name" value="Phosphofructokinase_dom"/>
</dbReference>
<dbReference type="InterPro" id="IPR035966">
    <property type="entry name" value="PKF_sf"/>
</dbReference>
<dbReference type="NCBIfam" id="TIGR02482">
    <property type="entry name" value="PFKA_ATP"/>
    <property type="match status" value="1"/>
</dbReference>
<dbReference type="NCBIfam" id="NF002872">
    <property type="entry name" value="PRK03202.1"/>
    <property type="match status" value="1"/>
</dbReference>
<dbReference type="PANTHER" id="PTHR13697:SF4">
    <property type="entry name" value="ATP-DEPENDENT 6-PHOSPHOFRUCTOKINASE"/>
    <property type="match status" value="1"/>
</dbReference>
<dbReference type="PANTHER" id="PTHR13697">
    <property type="entry name" value="PHOSPHOFRUCTOKINASE"/>
    <property type="match status" value="1"/>
</dbReference>
<dbReference type="Pfam" id="PF00365">
    <property type="entry name" value="PFK"/>
    <property type="match status" value="1"/>
</dbReference>
<dbReference type="PIRSF" id="PIRSF000532">
    <property type="entry name" value="ATP_PFK_prok"/>
    <property type="match status" value="1"/>
</dbReference>
<dbReference type="PRINTS" id="PR00476">
    <property type="entry name" value="PHFRCTKINASE"/>
</dbReference>
<dbReference type="SUPFAM" id="SSF53784">
    <property type="entry name" value="Phosphofructokinase"/>
    <property type="match status" value="1"/>
</dbReference>
<dbReference type="PROSITE" id="PS00433">
    <property type="entry name" value="PHOSPHOFRUCTOKINASE"/>
    <property type="match status" value="1"/>
</dbReference>
<comment type="function">
    <text evidence="1">Catalyzes the phosphorylation of D-fructose 6-phosphate to fructose 1,6-bisphosphate by ATP, the first committing step of glycolysis.</text>
</comment>
<comment type="catalytic activity">
    <reaction evidence="1">
        <text>beta-D-fructose 6-phosphate + ATP = beta-D-fructose 1,6-bisphosphate + ADP + H(+)</text>
        <dbReference type="Rhea" id="RHEA:16109"/>
        <dbReference type="ChEBI" id="CHEBI:15378"/>
        <dbReference type="ChEBI" id="CHEBI:30616"/>
        <dbReference type="ChEBI" id="CHEBI:32966"/>
        <dbReference type="ChEBI" id="CHEBI:57634"/>
        <dbReference type="ChEBI" id="CHEBI:456216"/>
        <dbReference type="EC" id="2.7.1.11"/>
    </reaction>
</comment>
<comment type="cofactor">
    <cofactor evidence="1">
        <name>Mg(2+)</name>
        <dbReference type="ChEBI" id="CHEBI:18420"/>
    </cofactor>
</comment>
<comment type="activity regulation">
    <text evidence="1">Allosterically activated by ADP and other diphosphonucleosides, and allosterically inhibited by phosphoenolpyruvate.</text>
</comment>
<comment type="pathway">
    <text evidence="1">Carbohydrate degradation; glycolysis; D-glyceraldehyde 3-phosphate and glycerone phosphate from D-glucose: step 3/4.</text>
</comment>
<comment type="subunit">
    <text evidence="1">Homotetramer.</text>
</comment>
<comment type="subcellular location">
    <subcellularLocation>
        <location evidence="1">Cytoplasm</location>
    </subcellularLocation>
</comment>
<comment type="similarity">
    <text evidence="1">Belongs to the phosphofructokinase type A (PFKA) family. ATP-dependent PFK group I subfamily. Prokaryotic clade 'B1' sub-subfamily.</text>
</comment>
<organism>
    <name type="scientific">Listeria monocytogenes serotype 4a (strain HCC23)</name>
    <dbReference type="NCBI Taxonomy" id="552536"/>
    <lineage>
        <taxon>Bacteria</taxon>
        <taxon>Bacillati</taxon>
        <taxon>Bacillota</taxon>
        <taxon>Bacilli</taxon>
        <taxon>Bacillales</taxon>
        <taxon>Listeriaceae</taxon>
        <taxon>Listeria</taxon>
    </lineage>
</organism>
<sequence length="319" mass="34434">MKRIAILTSGGDAPGMNAATRAVVRKAIYEGLEVYGINYGFLGLVNGDIRKLELGSVGDLLHRGGTFLYSARYPEFATEEGQLKGIEQLKKHQIDGLVVIGGDGSYHGAEALTKRGFPTIGIPGTIDNDISGTDFTIGFDTALNTVLDALDKIRDTATSHERTFIIEVMGRDAGDIALWSGLAGGAEAIIVPEESFNMDDVVDRLNKGRERGKKHSIIVVAEGVMSGNEFAKQLAEYGDYHARVTVLGHVQRGGSPTAFDRVLASRLGARSVELLLEKRGGLAVGIRENRIVENDISEILKEKHTLDQKLFDLASILSI</sequence>
<gene>
    <name evidence="1" type="primary">pfkA</name>
    <name type="ordered locus">LMHCC_0998</name>
</gene>
<accession>B8DHH7</accession>
<proteinExistence type="inferred from homology"/>
<protein>
    <recommendedName>
        <fullName evidence="1">ATP-dependent 6-phosphofructokinase</fullName>
        <shortName evidence="1">ATP-PFK</shortName>
        <shortName evidence="1">Phosphofructokinase</shortName>
        <ecNumber evidence="1">2.7.1.11</ecNumber>
    </recommendedName>
    <alternativeName>
        <fullName evidence="1">Phosphohexokinase</fullName>
    </alternativeName>
</protein>
<evidence type="ECO:0000255" key="1">
    <source>
        <dbReference type="HAMAP-Rule" id="MF_00339"/>
    </source>
</evidence>
<name>PFKA_LISMH</name>